<organism>
    <name type="scientific">Vibrio vulnificus (strain YJ016)</name>
    <dbReference type="NCBI Taxonomy" id="196600"/>
    <lineage>
        <taxon>Bacteria</taxon>
        <taxon>Pseudomonadati</taxon>
        <taxon>Pseudomonadota</taxon>
        <taxon>Gammaproteobacteria</taxon>
        <taxon>Vibrionales</taxon>
        <taxon>Vibrionaceae</taxon>
        <taxon>Vibrio</taxon>
    </lineage>
</organism>
<dbReference type="EC" id="2.3.1.46" evidence="1"/>
<dbReference type="EMBL" id="BA000037">
    <property type="protein sequence ID" value="BAC94256.1"/>
    <property type="molecule type" value="Genomic_DNA"/>
</dbReference>
<dbReference type="RefSeq" id="WP_011150128.1">
    <property type="nucleotide sequence ID" value="NC_005139.1"/>
</dbReference>
<dbReference type="SMR" id="Q7MLD5"/>
<dbReference type="STRING" id="672.VV93_v1c14010"/>
<dbReference type="KEGG" id="vvy:VV1492"/>
<dbReference type="PATRIC" id="fig|196600.6.peg.1477"/>
<dbReference type="eggNOG" id="COG1897">
    <property type="taxonomic scope" value="Bacteria"/>
</dbReference>
<dbReference type="HOGENOM" id="CLU_057851_0_1_6"/>
<dbReference type="UniPathway" id="UPA00051">
    <property type="reaction ID" value="UER00075"/>
</dbReference>
<dbReference type="Proteomes" id="UP000002675">
    <property type="component" value="Chromosome I"/>
</dbReference>
<dbReference type="GO" id="GO:0005737">
    <property type="term" value="C:cytoplasm"/>
    <property type="evidence" value="ECO:0007669"/>
    <property type="project" value="UniProtKB-SubCell"/>
</dbReference>
<dbReference type="GO" id="GO:0004414">
    <property type="term" value="F:homoserine O-acetyltransferase activity"/>
    <property type="evidence" value="ECO:0007669"/>
    <property type="project" value="UniProtKB-UniRule"/>
</dbReference>
<dbReference type="GO" id="GO:0008899">
    <property type="term" value="F:homoserine O-succinyltransferase activity"/>
    <property type="evidence" value="ECO:0007669"/>
    <property type="project" value="UniProtKB-EC"/>
</dbReference>
<dbReference type="GO" id="GO:0019281">
    <property type="term" value="P:L-methionine biosynthetic process from homoserine via O-succinyl-L-homoserine and cystathionine"/>
    <property type="evidence" value="ECO:0007669"/>
    <property type="project" value="InterPro"/>
</dbReference>
<dbReference type="CDD" id="cd03131">
    <property type="entry name" value="GATase1_HTS"/>
    <property type="match status" value="1"/>
</dbReference>
<dbReference type="FunFam" id="3.40.50.880:FF:000004">
    <property type="entry name" value="Homoserine O-succinyltransferase"/>
    <property type="match status" value="1"/>
</dbReference>
<dbReference type="Gene3D" id="3.40.50.880">
    <property type="match status" value="1"/>
</dbReference>
<dbReference type="HAMAP" id="MF_00295">
    <property type="entry name" value="MetA_acyltransf"/>
    <property type="match status" value="1"/>
</dbReference>
<dbReference type="InterPro" id="IPR029062">
    <property type="entry name" value="Class_I_gatase-like"/>
</dbReference>
<dbReference type="InterPro" id="IPR005697">
    <property type="entry name" value="HST_MetA"/>
</dbReference>
<dbReference type="InterPro" id="IPR033752">
    <property type="entry name" value="MetA_family"/>
</dbReference>
<dbReference type="NCBIfam" id="TIGR01001">
    <property type="entry name" value="metA"/>
    <property type="match status" value="1"/>
</dbReference>
<dbReference type="PANTHER" id="PTHR20919">
    <property type="entry name" value="HOMOSERINE O-SUCCINYLTRANSFERASE"/>
    <property type="match status" value="1"/>
</dbReference>
<dbReference type="PANTHER" id="PTHR20919:SF0">
    <property type="entry name" value="HOMOSERINE O-SUCCINYLTRANSFERASE"/>
    <property type="match status" value="1"/>
</dbReference>
<dbReference type="Pfam" id="PF04204">
    <property type="entry name" value="HTS"/>
    <property type="match status" value="1"/>
</dbReference>
<dbReference type="PIRSF" id="PIRSF000450">
    <property type="entry name" value="H_ser_succinyltr"/>
    <property type="match status" value="1"/>
</dbReference>
<dbReference type="SUPFAM" id="SSF52317">
    <property type="entry name" value="Class I glutamine amidotransferase-like"/>
    <property type="match status" value="1"/>
</dbReference>
<evidence type="ECO:0000255" key="1">
    <source>
        <dbReference type="HAMAP-Rule" id="MF_00295"/>
    </source>
</evidence>
<sequence length="313" mass="36377">MPIRIPDQLPAADVLRTENIFVMSETRAAKQEIRPLRVLILNLMPKKIETETQFLRLLSNSPLQVNVELLRIDDRPSKNTPTEHLDNFYRQFEMVKNRNFDGLIITGAPLGLVQFEDVIYWDHLKTIMEWAKSHVTSTLYVCWAAQAGLKLLYDLPKKTRKEKLSGVYHHRIHKPYHPVLRGFDDSFLAPHSRYADFSPEYLAEHTDLDILATSDDAGVYLATTKDKRNVFVTGHPEYDPHTLHNEYIRDLGEGMEPAIPVNYYPNDNPDNPPIASWRSHGHLLFSNWLNYCVYQQTPYDLDHFSEEAFTKDE</sequence>
<accession>Q7MLD5</accession>
<reference key="1">
    <citation type="journal article" date="2003" name="Genome Res.">
        <title>Comparative genome analysis of Vibrio vulnificus, a marine pathogen.</title>
        <authorList>
            <person name="Chen C.-Y."/>
            <person name="Wu K.-M."/>
            <person name="Chang Y.-C."/>
            <person name="Chang C.-H."/>
            <person name="Tsai H.-C."/>
            <person name="Liao T.-L."/>
            <person name="Liu Y.-M."/>
            <person name="Chen H.-J."/>
            <person name="Shen A.B.-T."/>
            <person name="Li J.-C."/>
            <person name="Su T.-L."/>
            <person name="Shao C.-P."/>
            <person name="Lee C.-T."/>
            <person name="Hor L.-I."/>
            <person name="Tsai S.-F."/>
        </authorList>
    </citation>
    <scope>NUCLEOTIDE SEQUENCE [LARGE SCALE GENOMIC DNA]</scope>
    <source>
        <strain>YJ016</strain>
    </source>
</reference>
<protein>
    <recommendedName>
        <fullName evidence="1">Homoserine O-succinyltransferase</fullName>
        <shortName evidence="1">HST</shortName>
        <ecNumber evidence="1">2.3.1.46</ecNumber>
    </recommendedName>
    <alternativeName>
        <fullName evidence="1">Homoserine transsuccinylase</fullName>
        <shortName evidence="1">HTS</shortName>
    </alternativeName>
</protein>
<feature type="chain" id="PRO_0000199767" description="Homoserine O-succinyltransferase">
    <location>
        <begin position="1"/>
        <end position="313"/>
    </location>
</feature>
<feature type="active site" description="Acyl-thioester intermediate" evidence="1">
    <location>
        <position position="142"/>
    </location>
</feature>
<feature type="active site" description="Proton acceptor" evidence="1">
    <location>
        <position position="235"/>
    </location>
</feature>
<feature type="active site" evidence="1">
    <location>
        <position position="237"/>
    </location>
</feature>
<feature type="binding site" evidence="1">
    <location>
        <position position="163"/>
    </location>
    <ligand>
        <name>substrate</name>
    </ligand>
</feature>
<feature type="binding site" evidence="1">
    <location>
        <position position="192"/>
    </location>
    <ligand>
        <name>substrate</name>
    </ligand>
</feature>
<feature type="binding site" evidence="1">
    <location>
        <position position="249"/>
    </location>
    <ligand>
        <name>substrate</name>
    </ligand>
</feature>
<feature type="site" description="Important for acyl-CoA specificity" evidence="1">
    <location>
        <position position="111"/>
    </location>
</feature>
<feature type="site" description="Important for substrate specificity" evidence="1">
    <location>
        <position position="192"/>
    </location>
</feature>
<comment type="function">
    <text evidence="1">Transfers a succinyl group from succinyl-CoA to L-homoserine, forming succinyl-L-homoserine.</text>
</comment>
<comment type="catalytic activity">
    <reaction evidence="1">
        <text>L-homoserine + succinyl-CoA = O-succinyl-L-homoserine + CoA</text>
        <dbReference type="Rhea" id="RHEA:22008"/>
        <dbReference type="ChEBI" id="CHEBI:57287"/>
        <dbReference type="ChEBI" id="CHEBI:57292"/>
        <dbReference type="ChEBI" id="CHEBI:57476"/>
        <dbReference type="ChEBI" id="CHEBI:57661"/>
        <dbReference type="EC" id="2.3.1.46"/>
    </reaction>
</comment>
<comment type="pathway">
    <text evidence="1">Amino-acid biosynthesis; L-methionine biosynthesis via de novo pathway; O-succinyl-L-homoserine from L-homoserine: step 1/1.</text>
</comment>
<comment type="subcellular location">
    <subcellularLocation>
        <location evidence="1">Cytoplasm</location>
    </subcellularLocation>
</comment>
<comment type="similarity">
    <text evidence="1">Belongs to the MetA family.</text>
</comment>
<keyword id="KW-0012">Acyltransferase</keyword>
<keyword id="KW-0028">Amino-acid biosynthesis</keyword>
<keyword id="KW-0963">Cytoplasm</keyword>
<keyword id="KW-0486">Methionine biosynthesis</keyword>
<keyword id="KW-0808">Transferase</keyword>
<gene>
    <name evidence="1" type="primary">metAS</name>
    <name type="ordered locus">VV1492</name>
</gene>
<name>METAS_VIBVY</name>
<proteinExistence type="inferred from homology"/>